<accession>Q00167</accession>
<organism>
    <name type="scientific">Ictalurid herpesvirus 1 (strain Auburn)</name>
    <name type="common">IcHV-1</name>
    <name type="synonym">Channel catfish herpesvirus</name>
    <dbReference type="NCBI Taxonomy" id="766178"/>
    <lineage>
        <taxon>Viruses</taxon>
        <taxon>Duplodnaviria</taxon>
        <taxon>Heunggongvirae</taxon>
        <taxon>Peploviricota</taxon>
        <taxon>Herviviricetes</taxon>
        <taxon>Herpesvirales</taxon>
        <taxon>Alloherpesviridae</taxon>
        <taxon>Ictavirus</taxon>
        <taxon>Ictavirus ictaluridallo1</taxon>
        <taxon>Ictalurid herpesvirus 1</taxon>
    </lineage>
</organism>
<organismHost>
    <name type="scientific">Ictaluridae</name>
    <name type="common">bullhead catfishes</name>
    <dbReference type="NCBI Taxonomy" id="7996"/>
</organismHost>
<proteinExistence type="predicted"/>
<name>VG78_ICHVA</name>
<dbReference type="EMBL" id="M75136">
    <property type="protein sequence ID" value="AAA88180.1"/>
    <property type="molecule type" value="Genomic_DNA"/>
</dbReference>
<dbReference type="PIR" id="D36794">
    <property type="entry name" value="ZBBEI4"/>
</dbReference>
<dbReference type="RefSeq" id="NP_041168.1">
    <property type="nucleotide sequence ID" value="NC_001493.2"/>
</dbReference>
<dbReference type="GeneID" id="1488433"/>
<dbReference type="KEGG" id="vg:1488433"/>
<dbReference type="Proteomes" id="UP000007643">
    <property type="component" value="Segment"/>
</dbReference>
<dbReference type="GO" id="GO:0008270">
    <property type="term" value="F:zinc ion binding"/>
    <property type="evidence" value="ECO:0007669"/>
    <property type="project" value="UniProtKB-KW"/>
</dbReference>
<gene>
    <name type="primary">ORF78</name>
</gene>
<protein>
    <recommendedName>
        <fullName>Putative zinc-binding protein ORF78</fullName>
    </recommendedName>
</protein>
<feature type="chain" id="PRO_0000222152" description="Putative zinc-binding protein ORF78">
    <location>
        <begin position="1"/>
        <end position="400"/>
    </location>
</feature>
<feature type="region of interest" description="Disordered" evidence="1">
    <location>
        <begin position="9"/>
        <end position="33"/>
    </location>
</feature>
<sequence length="400" mass="44167">MELSLYRELPRKRRAVAQPRTRQPPPKVHREDTGIVPGLRVESSVRPDSITNFRRLAAVKFKNPEVMECGGKGGCEECKTRPALMLNCDCDTAKVPICLGCKPRAVRDHPCFRNRTCVSCGTIGVVAVVKLGCCGATLCDSCLGADWYPKSRTRGTCGYCGAQTLGVHYRPMKIIKNTRPYIPAETPIPKVQRHISARLLEEIRRCQLSRSEIVSLFGDHGSMMEYPTAVPAHLLAPKMIGYSDISKAFADDTLPRCSRAMCAANGVPGWRCGFQAPVLFPGMDMCLLCVVRAQEQTITQLVLNGTIWEDAPIAGTYHMSVWLDPTTVSVTPVDISAIDTFAVEFCGNLGSHHPEKFYRLSDLTCRIRWTAGGFLDPESLMVPEKERLKNTASAHSNNSH</sequence>
<keyword id="KW-0479">Metal-binding</keyword>
<keyword id="KW-1185">Reference proteome</keyword>
<keyword id="KW-0862">Zinc</keyword>
<keyword id="KW-0863">Zinc-finger</keyword>
<evidence type="ECO:0000256" key="1">
    <source>
        <dbReference type="SAM" id="MobiDB-lite"/>
    </source>
</evidence>
<reference key="1">
    <citation type="journal article" date="1992" name="Virology">
        <title>Channel catfish virus: a new type of herpesvirus.</title>
        <authorList>
            <person name="Davison A.J."/>
        </authorList>
    </citation>
    <scope>NUCLEOTIDE SEQUENCE [LARGE SCALE GENOMIC DNA]</scope>
</reference>